<name>GRAR_STAAR</name>
<feature type="chain" id="PRO_0000347899" description="Response regulator protein GraR">
    <location>
        <begin position="1"/>
        <end position="224"/>
    </location>
</feature>
<feature type="domain" description="Response regulatory" evidence="4">
    <location>
        <begin position="2"/>
        <end position="115"/>
    </location>
</feature>
<feature type="DNA-binding region" description="OmpR/PhoB-type" evidence="5">
    <location>
        <begin position="126"/>
        <end position="224"/>
    </location>
</feature>
<feature type="modified residue" description="4-aspartylphosphate" evidence="4">
    <location>
        <position position="51"/>
    </location>
</feature>
<feature type="modified residue" description="Phosphothreonine" evidence="3">
    <location>
        <position position="128"/>
    </location>
</feature>
<feature type="modified residue" description="Phosphothreonine" evidence="3">
    <location>
        <position position="130"/>
    </location>
</feature>
<feature type="modified residue" description="Phosphothreonine" evidence="3">
    <location>
        <position position="149"/>
    </location>
</feature>
<reference key="1">
    <citation type="journal article" date="2004" name="Proc. Natl. Acad. Sci. U.S.A.">
        <title>Complete genomes of two clinical Staphylococcus aureus strains: evidence for the rapid evolution of virulence and drug resistance.</title>
        <authorList>
            <person name="Holden M.T.G."/>
            <person name="Feil E.J."/>
            <person name="Lindsay J.A."/>
            <person name="Peacock S.J."/>
            <person name="Day N.P.J."/>
            <person name="Enright M.C."/>
            <person name="Foster T.J."/>
            <person name="Moore C.E."/>
            <person name="Hurst L."/>
            <person name="Atkin R."/>
            <person name="Barron A."/>
            <person name="Bason N."/>
            <person name="Bentley S.D."/>
            <person name="Chillingworth C."/>
            <person name="Chillingworth T."/>
            <person name="Churcher C."/>
            <person name="Clark L."/>
            <person name="Corton C."/>
            <person name="Cronin A."/>
            <person name="Doggett J."/>
            <person name="Dowd L."/>
            <person name="Feltwell T."/>
            <person name="Hance Z."/>
            <person name="Harris B."/>
            <person name="Hauser H."/>
            <person name="Holroyd S."/>
            <person name="Jagels K."/>
            <person name="James K.D."/>
            <person name="Lennard N."/>
            <person name="Line A."/>
            <person name="Mayes R."/>
            <person name="Moule S."/>
            <person name="Mungall K."/>
            <person name="Ormond D."/>
            <person name="Quail M.A."/>
            <person name="Rabbinowitsch E."/>
            <person name="Rutherford K.M."/>
            <person name="Sanders M."/>
            <person name="Sharp S."/>
            <person name="Simmonds M."/>
            <person name="Stevens K."/>
            <person name="Whitehead S."/>
            <person name="Barrell B.G."/>
            <person name="Spratt B.G."/>
            <person name="Parkhill J."/>
        </authorList>
    </citation>
    <scope>NUCLEOTIDE SEQUENCE [LARGE SCALE GENOMIC DNA]</scope>
    <source>
        <strain>MRSA252</strain>
    </source>
</reference>
<accession>Q6GJ11</accession>
<proteinExistence type="inferred from homology"/>
<gene>
    <name type="primary">graR</name>
    <name type="ordered locus">SAR0669</name>
</gene>
<sequence length="224" mass="26063">MQILLVEDDNTLFQELKKELEQWDFNVAGIEDFGKVMDTFESFNPEIVILDVQLPKYDGFYWCRKMREVSNVPILFLSSRDNPMDQVMSMELGADDYMQKPFYTNVLIAKLQAIYRRVYEFTAEEKRTLTWQDAVIDLSKDSIQKGDQTIFLSKTEMIILEILITKKNQIVSRDTIITALWDDEAFVSDNTLTVNVNRLRKKLSEIGMDSAIETKVGKGYMAHE</sequence>
<keyword id="KW-0010">Activator</keyword>
<keyword id="KW-0046">Antibiotic resistance</keyword>
<keyword id="KW-0963">Cytoplasm</keyword>
<keyword id="KW-0238">DNA-binding</keyword>
<keyword id="KW-0597">Phosphoprotein</keyword>
<keyword id="KW-0678">Repressor</keyword>
<keyword id="KW-0804">Transcription</keyword>
<keyword id="KW-0805">Transcription regulation</keyword>
<keyword id="KW-0902">Two-component regulatory system</keyword>
<keyword id="KW-0843">Virulence</keyword>
<dbReference type="EMBL" id="BX571856">
    <property type="protein sequence ID" value="CAG39686.1"/>
    <property type="molecule type" value="Genomic_DNA"/>
</dbReference>
<dbReference type="RefSeq" id="WP_001166499.1">
    <property type="nucleotide sequence ID" value="NC_002952.2"/>
</dbReference>
<dbReference type="SMR" id="Q6GJ11"/>
<dbReference type="KEGG" id="sar:SAR0669"/>
<dbReference type="HOGENOM" id="CLU_000445_30_3_9"/>
<dbReference type="Proteomes" id="UP000000596">
    <property type="component" value="Chromosome"/>
</dbReference>
<dbReference type="GO" id="GO:0005829">
    <property type="term" value="C:cytosol"/>
    <property type="evidence" value="ECO:0007669"/>
    <property type="project" value="TreeGrafter"/>
</dbReference>
<dbReference type="GO" id="GO:0032993">
    <property type="term" value="C:protein-DNA complex"/>
    <property type="evidence" value="ECO:0007669"/>
    <property type="project" value="TreeGrafter"/>
</dbReference>
<dbReference type="GO" id="GO:0000156">
    <property type="term" value="F:phosphorelay response regulator activity"/>
    <property type="evidence" value="ECO:0007669"/>
    <property type="project" value="TreeGrafter"/>
</dbReference>
<dbReference type="GO" id="GO:0000976">
    <property type="term" value="F:transcription cis-regulatory region binding"/>
    <property type="evidence" value="ECO:0007669"/>
    <property type="project" value="TreeGrafter"/>
</dbReference>
<dbReference type="GO" id="GO:0006355">
    <property type="term" value="P:regulation of DNA-templated transcription"/>
    <property type="evidence" value="ECO:0007669"/>
    <property type="project" value="InterPro"/>
</dbReference>
<dbReference type="GO" id="GO:0046677">
    <property type="term" value="P:response to antibiotic"/>
    <property type="evidence" value="ECO:0007669"/>
    <property type="project" value="UniProtKB-KW"/>
</dbReference>
<dbReference type="CDD" id="cd18159">
    <property type="entry name" value="REC_OmpR_NsrR-like"/>
    <property type="match status" value="1"/>
</dbReference>
<dbReference type="CDD" id="cd00383">
    <property type="entry name" value="trans_reg_C"/>
    <property type="match status" value="1"/>
</dbReference>
<dbReference type="FunFam" id="3.40.50.2300:FF:000232">
    <property type="entry name" value="Response regulator GraR"/>
    <property type="match status" value="1"/>
</dbReference>
<dbReference type="FunFam" id="1.10.10.10:FF:000546">
    <property type="entry name" value="Two-component response regulator GraR"/>
    <property type="match status" value="1"/>
</dbReference>
<dbReference type="Gene3D" id="3.40.50.2300">
    <property type="match status" value="1"/>
</dbReference>
<dbReference type="Gene3D" id="1.10.10.10">
    <property type="entry name" value="Winged helix-like DNA-binding domain superfamily/Winged helix DNA-binding domain"/>
    <property type="match status" value="1"/>
</dbReference>
<dbReference type="InterPro" id="IPR011006">
    <property type="entry name" value="CheY-like_superfamily"/>
</dbReference>
<dbReference type="InterPro" id="IPR001867">
    <property type="entry name" value="OmpR/PhoB-type_DNA-bd"/>
</dbReference>
<dbReference type="InterPro" id="IPR016032">
    <property type="entry name" value="Sig_transdc_resp-reg_C-effctor"/>
</dbReference>
<dbReference type="InterPro" id="IPR001789">
    <property type="entry name" value="Sig_transdc_resp-reg_receiver"/>
</dbReference>
<dbReference type="InterPro" id="IPR039420">
    <property type="entry name" value="WalR-like"/>
</dbReference>
<dbReference type="InterPro" id="IPR036388">
    <property type="entry name" value="WH-like_DNA-bd_sf"/>
</dbReference>
<dbReference type="PANTHER" id="PTHR48111">
    <property type="entry name" value="REGULATOR OF RPOS"/>
    <property type="match status" value="1"/>
</dbReference>
<dbReference type="PANTHER" id="PTHR48111:SF27">
    <property type="entry name" value="SENSORY TRANSDUCTION PROTEIN BCER"/>
    <property type="match status" value="1"/>
</dbReference>
<dbReference type="Pfam" id="PF00072">
    <property type="entry name" value="Response_reg"/>
    <property type="match status" value="1"/>
</dbReference>
<dbReference type="Pfam" id="PF00486">
    <property type="entry name" value="Trans_reg_C"/>
    <property type="match status" value="1"/>
</dbReference>
<dbReference type="SMART" id="SM00448">
    <property type="entry name" value="REC"/>
    <property type="match status" value="1"/>
</dbReference>
<dbReference type="SMART" id="SM00862">
    <property type="entry name" value="Trans_reg_C"/>
    <property type="match status" value="1"/>
</dbReference>
<dbReference type="SUPFAM" id="SSF46894">
    <property type="entry name" value="C-terminal effector domain of the bipartite response regulators"/>
    <property type="match status" value="1"/>
</dbReference>
<dbReference type="SUPFAM" id="SSF52172">
    <property type="entry name" value="CheY-like"/>
    <property type="match status" value="1"/>
</dbReference>
<dbReference type="PROSITE" id="PS51755">
    <property type="entry name" value="OMPR_PHOB"/>
    <property type="match status" value="1"/>
</dbReference>
<dbReference type="PROSITE" id="PS50110">
    <property type="entry name" value="RESPONSE_REGULATORY"/>
    <property type="match status" value="1"/>
</dbReference>
<organism>
    <name type="scientific">Staphylococcus aureus (strain MRSA252)</name>
    <dbReference type="NCBI Taxonomy" id="282458"/>
    <lineage>
        <taxon>Bacteria</taxon>
        <taxon>Bacillati</taxon>
        <taxon>Bacillota</taxon>
        <taxon>Bacilli</taxon>
        <taxon>Bacillales</taxon>
        <taxon>Staphylococcaceae</taxon>
        <taxon>Staphylococcus</taxon>
    </lineage>
</organism>
<evidence type="ECO:0000250" key="1"/>
<evidence type="ECO:0000250" key="2">
    <source>
        <dbReference type="UniProtKB" id="Q2G0D9"/>
    </source>
</evidence>
<evidence type="ECO:0000250" key="3">
    <source>
        <dbReference type="UniProtKB" id="Q2G0E0"/>
    </source>
</evidence>
<evidence type="ECO:0000255" key="4">
    <source>
        <dbReference type="PROSITE-ProRule" id="PRU00169"/>
    </source>
</evidence>
<evidence type="ECO:0000255" key="5">
    <source>
        <dbReference type="PROSITE-ProRule" id="PRU01091"/>
    </source>
</evidence>
<protein>
    <recommendedName>
        <fullName>Response regulator protein GraR</fullName>
    </recommendedName>
    <alternativeName>
        <fullName>Glycopeptide resistance-associated protein R</fullName>
    </alternativeName>
</protein>
<comment type="function">
    <text evidence="3">Member of the two-component regulatory system GraR/GraS involved in resistance against cationic antimicrobial peptides (CAMPs). Upon phosphorylation by GraS, functions as a transcription regulator by direct binding to promoter regions of target genes such as adhesins, exoproteins, transporters, toxins, and proteins involved in cell wall synthesis. Down-regulates the expression of many genes involved in RNA and amino acid synthesis or glycolysis.</text>
</comment>
<comment type="subunit">
    <text evidence="2">Interacts with GraX.</text>
</comment>
<comment type="subcellular location">
    <subcellularLocation>
        <location evidence="1">Cytoplasm</location>
    </subcellularLocation>
</comment>
<comment type="PTM">
    <text evidence="3">Phosphorylated by GraS. Phosphorylated by Stk1; phosphorylation increases the DNA-binding activity of GraR.</text>
</comment>